<sequence>MANTGSLVLLRHGESDWNALNLFTGWVDVGLTDKGQAEAVRSGELIAEHDLLPDVLYTSLLRRAITTAHLALDSADRLWIPVRRSWRLNERHYGALQGLDKAETKARYGEEQFMAWRRSYDTPPPPIERGSQFSQDADPRYADIGGGPLTECLADVVARFLPYFTDVIVGDLRVGKTVLIVAHGNSLRALVKHLDQMSDDEIVGLNIPTGIPLRYDLDSAMRPLVRGGTYLDPEAAAAGAAAVAGQGRG</sequence>
<comment type="function">
    <text evidence="1">Catalyzes the interconversion of 2-phosphoglycerate and 3-phosphoglycerate.</text>
</comment>
<comment type="catalytic activity">
    <reaction evidence="1">
        <text>(2R)-2-phosphoglycerate = (2R)-3-phosphoglycerate</text>
        <dbReference type="Rhea" id="RHEA:15901"/>
        <dbReference type="ChEBI" id="CHEBI:58272"/>
        <dbReference type="ChEBI" id="CHEBI:58289"/>
        <dbReference type="EC" id="5.4.2.11"/>
    </reaction>
</comment>
<comment type="pathway">
    <text evidence="1">Carbohydrate degradation; glycolysis; pyruvate from D-glyceraldehyde 3-phosphate: step 3/5.</text>
</comment>
<comment type="similarity">
    <text evidence="1">Belongs to the phosphoglycerate mutase family. BPG-dependent PGAM subfamily.</text>
</comment>
<proteinExistence type="inferred from homology"/>
<keyword id="KW-0312">Gluconeogenesis</keyword>
<keyword id="KW-0324">Glycolysis</keyword>
<keyword id="KW-0413">Isomerase</keyword>
<keyword id="KW-1185">Reference proteome</keyword>
<feature type="chain" id="PRO_1000064079" description="2,3-bisphosphoglycerate-dependent phosphoglycerate mutase">
    <location>
        <begin position="1"/>
        <end position="249"/>
    </location>
</feature>
<feature type="active site" description="Tele-phosphohistidine intermediate" evidence="1">
    <location>
        <position position="12"/>
    </location>
</feature>
<feature type="active site" description="Proton donor/acceptor" evidence="1">
    <location>
        <position position="90"/>
    </location>
</feature>
<feature type="binding site" evidence="1">
    <location>
        <begin position="11"/>
        <end position="18"/>
    </location>
    <ligand>
        <name>substrate</name>
    </ligand>
</feature>
<feature type="binding site" evidence="1">
    <location>
        <begin position="24"/>
        <end position="25"/>
    </location>
    <ligand>
        <name>substrate</name>
    </ligand>
</feature>
<feature type="binding site" evidence="1">
    <location>
        <position position="63"/>
    </location>
    <ligand>
        <name>substrate</name>
    </ligand>
</feature>
<feature type="binding site" evidence="1">
    <location>
        <begin position="90"/>
        <end position="93"/>
    </location>
    <ligand>
        <name>substrate</name>
    </ligand>
</feature>
<feature type="binding site" evidence="1">
    <location>
        <position position="101"/>
    </location>
    <ligand>
        <name>substrate</name>
    </ligand>
</feature>
<feature type="binding site" evidence="1">
    <location>
        <begin position="117"/>
        <end position="118"/>
    </location>
    <ligand>
        <name>substrate</name>
    </ligand>
</feature>
<feature type="binding site" evidence="1">
    <location>
        <begin position="184"/>
        <end position="185"/>
    </location>
    <ligand>
        <name>substrate</name>
    </ligand>
</feature>
<feature type="site" description="Transition state stabilizer" evidence="1">
    <location>
        <position position="183"/>
    </location>
</feature>
<reference key="1">
    <citation type="journal article" date="2008" name="PLoS ONE">
        <title>Genetic basis of virulence attenuation revealed by comparative genomic analysis of Mycobacterium tuberculosis strain H37Ra versus H37Rv.</title>
        <authorList>
            <person name="Zheng H."/>
            <person name="Lu L."/>
            <person name="Wang B."/>
            <person name="Pu S."/>
            <person name="Zhang X."/>
            <person name="Zhu G."/>
            <person name="Shi W."/>
            <person name="Zhang L."/>
            <person name="Wang H."/>
            <person name="Wang S."/>
            <person name="Zhao G."/>
            <person name="Zhang Y."/>
        </authorList>
    </citation>
    <scope>NUCLEOTIDE SEQUENCE [LARGE SCALE GENOMIC DNA]</scope>
    <source>
        <strain>ATCC 25177 / H37Ra</strain>
    </source>
</reference>
<gene>
    <name evidence="1" type="primary">gpmA</name>
    <name type="ordered locus">MRA_0496</name>
</gene>
<evidence type="ECO:0000255" key="1">
    <source>
        <dbReference type="HAMAP-Rule" id="MF_01039"/>
    </source>
</evidence>
<name>GPMA_MYCTA</name>
<organism>
    <name type="scientific">Mycobacterium tuberculosis (strain ATCC 25177 / H37Ra)</name>
    <dbReference type="NCBI Taxonomy" id="419947"/>
    <lineage>
        <taxon>Bacteria</taxon>
        <taxon>Bacillati</taxon>
        <taxon>Actinomycetota</taxon>
        <taxon>Actinomycetes</taxon>
        <taxon>Mycobacteriales</taxon>
        <taxon>Mycobacteriaceae</taxon>
        <taxon>Mycobacterium</taxon>
        <taxon>Mycobacterium tuberculosis complex</taxon>
    </lineage>
</organism>
<accession>A5TZL7</accession>
<protein>
    <recommendedName>
        <fullName evidence="1">2,3-bisphosphoglycerate-dependent phosphoglycerate mutase</fullName>
        <shortName evidence="1">BPG-dependent PGAM</shortName>
        <shortName evidence="1">PGAM</shortName>
        <shortName evidence="1">Phosphoglyceromutase</shortName>
        <shortName evidence="1">dPGM</shortName>
        <ecNumber evidence="1">5.4.2.11</ecNumber>
    </recommendedName>
</protein>
<dbReference type="EC" id="5.4.2.11" evidence="1"/>
<dbReference type="EMBL" id="CP000611">
    <property type="protein sequence ID" value="ABQ72217.1"/>
    <property type="molecule type" value="Genomic_DNA"/>
</dbReference>
<dbReference type="RefSeq" id="WP_003402379.1">
    <property type="nucleotide sequence ID" value="NZ_CP016972.1"/>
</dbReference>
<dbReference type="SMR" id="A5TZL7"/>
<dbReference type="KEGG" id="mra:MRA_0496"/>
<dbReference type="eggNOG" id="COG0588">
    <property type="taxonomic scope" value="Bacteria"/>
</dbReference>
<dbReference type="HOGENOM" id="CLU_033323_1_1_11"/>
<dbReference type="UniPathway" id="UPA00109">
    <property type="reaction ID" value="UER00186"/>
</dbReference>
<dbReference type="Proteomes" id="UP000001988">
    <property type="component" value="Chromosome"/>
</dbReference>
<dbReference type="GO" id="GO:0004619">
    <property type="term" value="F:phosphoglycerate mutase activity"/>
    <property type="evidence" value="ECO:0007669"/>
    <property type="project" value="UniProtKB-EC"/>
</dbReference>
<dbReference type="GO" id="GO:0006094">
    <property type="term" value="P:gluconeogenesis"/>
    <property type="evidence" value="ECO:0007669"/>
    <property type="project" value="UniProtKB-UniRule"/>
</dbReference>
<dbReference type="GO" id="GO:0006096">
    <property type="term" value="P:glycolytic process"/>
    <property type="evidence" value="ECO:0007669"/>
    <property type="project" value="UniProtKB-UniRule"/>
</dbReference>
<dbReference type="CDD" id="cd07067">
    <property type="entry name" value="HP_PGM_like"/>
    <property type="match status" value="1"/>
</dbReference>
<dbReference type="FunFam" id="3.40.50.1240:FF:000012">
    <property type="entry name" value="Phosphoglycerate mutase 1"/>
    <property type="match status" value="1"/>
</dbReference>
<dbReference type="Gene3D" id="3.40.50.1240">
    <property type="entry name" value="Phosphoglycerate mutase-like"/>
    <property type="match status" value="1"/>
</dbReference>
<dbReference type="HAMAP" id="MF_01039">
    <property type="entry name" value="PGAM_GpmA"/>
    <property type="match status" value="1"/>
</dbReference>
<dbReference type="InterPro" id="IPR013078">
    <property type="entry name" value="His_Pase_superF_clade-1"/>
</dbReference>
<dbReference type="InterPro" id="IPR029033">
    <property type="entry name" value="His_PPase_superfam"/>
</dbReference>
<dbReference type="InterPro" id="IPR001345">
    <property type="entry name" value="PG/BPGM_mutase_AS"/>
</dbReference>
<dbReference type="InterPro" id="IPR005952">
    <property type="entry name" value="Phosphogly_mut1"/>
</dbReference>
<dbReference type="NCBIfam" id="TIGR01258">
    <property type="entry name" value="pgm_1"/>
    <property type="match status" value="1"/>
</dbReference>
<dbReference type="NCBIfam" id="NF010713">
    <property type="entry name" value="PRK14115.1"/>
    <property type="match status" value="1"/>
</dbReference>
<dbReference type="NCBIfam" id="NF010718">
    <property type="entry name" value="PRK14120.1"/>
    <property type="match status" value="1"/>
</dbReference>
<dbReference type="PANTHER" id="PTHR11931">
    <property type="entry name" value="PHOSPHOGLYCERATE MUTASE"/>
    <property type="match status" value="1"/>
</dbReference>
<dbReference type="Pfam" id="PF00300">
    <property type="entry name" value="His_Phos_1"/>
    <property type="match status" value="1"/>
</dbReference>
<dbReference type="PIRSF" id="PIRSF000709">
    <property type="entry name" value="6PFK_2-Ptase"/>
    <property type="match status" value="1"/>
</dbReference>
<dbReference type="SMART" id="SM00855">
    <property type="entry name" value="PGAM"/>
    <property type="match status" value="1"/>
</dbReference>
<dbReference type="SUPFAM" id="SSF53254">
    <property type="entry name" value="Phosphoglycerate mutase-like"/>
    <property type="match status" value="1"/>
</dbReference>
<dbReference type="PROSITE" id="PS00175">
    <property type="entry name" value="PG_MUTASE"/>
    <property type="match status" value="1"/>
</dbReference>